<comment type="function">
    <text evidence="1">Involved in the trafficking of vacuolar proteins. May function as a sorting receptor for protein trafficking to the protein storage vacuole (PSV) (By similarity).</text>
</comment>
<comment type="subcellular location">
    <subcellularLocation>
        <location evidence="1">Prevacuolar compartment membrane</location>
    </subcellularLocation>
    <subcellularLocation>
        <location evidence="1">Protein storage vacuole membrane</location>
        <topology evidence="5">Single-pass type I membrane protein</topology>
    </subcellularLocation>
</comment>
<comment type="sequence caution" evidence="5">
    <conflict type="erroneous gene model prediction">
        <sequence resource="EMBL-CDS" id="AAC25519"/>
    </conflict>
</comment>
<keyword id="KW-1015">Disulfide bond</keyword>
<keyword id="KW-0325">Glycoprotein</keyword>
<keyword id="KW-0472">Membrane</keyword>
<keyword id="KW-0479">Metal-binding</keyword>
<keyword id="KW-0653">Protein transport</keyword>
<keyword id="KW-1185">Reference proteome</keyword>
<keyword id="KW-0732">Signal</keyword>
<keyword id="KW-0812">Transmembrane</keyword>
<keyword id="KW-1133">Transmembrane helix</keyword>
<keyword id="KW-0813">Transport</keyword>
<keyword id="KW-0926">Vacuole</keyword>
<keyword id="KW-0862">Zinc</keyword>
<keyword id="KW-0863">Zinc-finger</keyword>
<protein>
    <recommendedName>
        <fullName>Receptor homology region, transmembrane domain- and RING domain-containing protein 3</fullName>
        <shortName>AtRMR3</shortName>
    </recommendedName>
</protein>
<dbReference type="EMBL" id="AC003979">
    <property type="protein sequence ID" value="AAC25519.1"/>
    <property type="status" value="ALT_SEQ"/>
    <property type="molecule type" value="Genomic_DNA"/>
</dbReference>
<dbReference type="EMBL" id="CP002684">
    <property type="protein sequence ID" value="AEE30268.1"/>
    <property type="molecule type" value="Genomic_DNA"/>
</dbReference>
<dbReference type="PIR" id="T00777">
    <property type="entry name" value="T00777"/>
</dbReference>
<dbReference type="RefSeq" id="NP_173681.1">
    <property type="nucleotide sequence ID" value="NM_102114.2"/>
</dbReference>
<dbReference type="SMR" id="F4I2Y3"/>
<dbReference type="FunCoup" id="F4I2Y3">
    <property type="interactions" value="3009"/>
</dbReference>
<dbReference type="STRING" id="3702.F4I2Y3"/>
<dbReference type="GlyCosmos" id="F4I2Y3">
    <property type="glycosylation" value="1 site, No reported glycans"/>
</dbReference>
<dbReference type="GlyGen" id="F4I2Y3">
    <property type="glycosylation" value="1 site"/>
</dbReference>
<dbReference type="PaxDb" id="3702-AT1G22670.1"/>
<dbReference type="EnsemblPlants" id="AT1G22670.1">
    <property type="protein sequence ID" value="AT1G22670.1"/>
    <property type="gene ID" value="AT1G22670"/>
</dbReference>
<dbReference type="GeneID" id="838873"/>
<dbReference type="Gramene" id="AT1G22670.1">
    <property type="protein sequence ID" value="AT1G22670.1"/>
    <property type="gene ID" value="AT1G22670"/>
</dbReference>
<dbReference type="KEGG" id="ath:AT1G22670"/>
<dbReference type="Araport" id="AT1G22670"/>
<dbReference type="TAIR" id="AT1G22670">
    <property type="gene designation" value="RMR3"/>
</dbReference>
<dbReference type="eggNOG" id="KOG4628">
    <property type="taxonomic scope" value="Eukaryota"/>
</dbReference>
<dbReference type="HOGENOM" id="CLU_035275_2_0_1"/>
<dbReference type="InParanoid" id="F4I2Y3"/>
<dbReference type="OMA" id="GFSCAIC"/>
<dbReference type="PRO" id="PR:F4I2Y3"/>
<dbReference type="Proteomes" id="UP000006548">
    <property type="component" value="Chromosome 1"/>
</dbReference>
<dbReference type="ExpressionAtlas" id="F4I2Y3">
    <property type="expression patterns" value="baseline and differential"/>
</dbReference>
<dbReference type="GO" id="GO:0012505">
    <property type="term" value="C:endomembrane system"/>
    <property type="evidence" value="ECO:0007669"/>
    <property type="project" value="UniProtKB-ARBA"/>
</dbReference>
<dbReference type="GO" id="GO:0032586">
    <property type="term" value="C:protein storage vacuole membrane"/>
    <property type="evidence" value="ECO:0007669"/>
    <property type="project" value="UniProtKB-SubCell"/>
</dbReference>
<dbReference type="GO" id="GO:0008270">
    <property type="term" value="F:zinc ion binding"/>
    <property type="evidence" value="ECO:0007669"/>
    <property type="project" value="UniProtKB-KW"/>
</dbReference>
<dbReference type="GO" id="GO:0015031">
    <property type="term" value="P:protein transport"/>
    <property type="evidence" value="ECO:0007669"/>
    <property type="project" value="UniProtKB-KW"/>
</dbReference>
<dbReference type="CDD" id="cd02123">
    <property type="entry name" value="PA_C_RZF_like"/>
    <property type="match status" value="1"/>
</dbReference>
<dbReference type="FunFam" id="3.30.40.10:FF:000276">
    <property type="entry name" value="Receptor homology region transmembrane domain-and RING domain-containing protein 2"/>
    <property type="match status" value="1"/>
</dbReference>
<dbReference type="FunFam" id="3.50.30.30:FF:000020">
    <property type="entry name" value="Receptor homology region transmembrane domain-and RING domain-containing protein 2"/>
    <property type="match status" value="1"/>
</dbReference>
<dbReference type="Gene3D" id="3.50.30.30">
    <property type="match status" value="1"/>
</dbReference>
<dbReference type="Gene3D" id="3.30.40.10">
    <property type="entry name" value="Zinc/RING finger domain, C3HC4 (zinc finger)"/>
    <property type="match status" value="1"/>
</dbReference>
<dbReference type="InterPro" id="IPR051653">
    <property type="entry name" value="E3_ligase_sorting_rcpt"/>
</dbReference>
<dbReference type="InterPro" id="IPR046450">
    <property type="entry name" value="PA_dom_sf"/>
</dbReference>
<dbReference type="InterPro" id="IPR003137">
    <property type="entry name" value="PA_domain"/>
</dbReference>
<dbReference type="InterPro" id="IPR001841">
    <property type="entry name" value="Znf_RING"/>
</dbReference>
<dbReference type="InterPro" id="IPR013083">
    <property type="entry name" value="Znf_RING/FYVE/PHD"/>
</dbReference>
<dbReference type="InterPro" id="IPR044744">
    <property type="entry name" value="ZNRF4/RNF13/RNF167_PA"/>
</dbReference>
<dbReference type="PANTHER" id="PTHR47168">
    <property type="entry name" value="RING ZINC FINGER DOMAIN SUPERFAMILY PROTEIN-RELATED"/>
    <property type="match status" value="1"/>
</dbReference>
<dbReference type="PANTHER" id="PTHR47168:SF5">
    <property type="entry name" value="RING-TYPE DOMAIN-CONTAINING PROTEIN"/>
    <property type="match status" value="1"/>
</dbReference>
<dbReference type="Pfam" id="PF02225">
    <property type="entry name" value="PA"/>
    <property type="match status" value="1"/>
</dbReference>
<dbReference type="Pfam" id="PF13639">
    <property type="entry name" value="zf-RING_2"/>
    <property type="match status" value="1"/>
</dbReference>
<dbReference type="SMART" id="SM00184">
    <property type="entry name" value="RING"/>
    <property type="match status" value="1"/>
</dbReference>
<dbReference type="SUPFAM" id="SSF52025">
    <property type="entry name" value="PA domain"/>
    <property type="match status" value="1"/>
</dbReference>
<dbReference type="SUPFAM" id="SSF57850">
    <property type="entry name" value="RING/U-box"/>
    <property type="match status" value="1"/>
</dbReference>
<dbReference type="PROSITE" id="PS50089">
    <property type="entry name" value="ZF_RING_2"/>
    <property type="match status" value="1"/>
</dbReference>
<sequence>MNLVVLLILTLLLFIVSYVVDAGQVILVDSNITRSFVDMEADFSPSVTTVETGVVYVAEPLNACRNLRNKPEQSPYGTSPLVLIIRGGCSFEYKVRNAQRSGFKAAIVYDNVDRNFLSAMGGDSDGIKIQAVFVMKRAGEMLKKYAGSEEMEVMLVPPNTEDSVWSLYASIALILSLAIFCVMVTCVFFYRYCSTIRNSTSQFNGMCRRTVKAMPSVTFTCAKIDNTTGFSCAICLEDYIVGDKLRVLPCSHKFHVACVDSWLISWRTFCPVCKRDARTTADEPLATESTPFLSSSIATSSLVCIDSPPLGSSVSFSPAHVSSSFIHQFVRSSPMNGSRISENLRRQASPLQSSSQRSHLSMKSSHSLGYSTMSPLNAMGMSPYRPYPSNASPGLFSSTNHLLSNYTANTFSHFASAHSLPD</sequence>
<accession>F4I2Y3</accession>
<accession>O80554</accession>
<reference key="1">
    <citation type="journal article" date="2000" name="Nature">
        <title>Sequence and analysis of chromosome 1 of the plant Arabidopsis thaliana.</title>
        <authorList>
            <person name="Theologis A."/>
            <person name="Ecker J.R."/>
            <person name="Palm C.J."/>
            <person name="Federspiel N.A."/>
            <person name="Kaul S."/>
            <person name="White O."/>
            <person name="Alonso J."/>
            <person name="Altafi H."/>
            <person name="Araujo R."/>
            <person name="Bowman C.L."/>
            <person name="Brooks S.Y."/>
            <person name="Buehler E."/>
            <person name="Chan A."/>
            <person name="Chao Q."/>
            <person name="Chen H."/>
            <person name="Cheuk R.F."/>
            <person name="Chin C.W."/>
            <person name="Chung M.K."/>
            <person name="Conn L."/>
            <person name="Conway A.B."/>
            <person name="Conway A.R."/>
            <person name="Creasy T.H."/>
            <person name="Dewar K."/>
            <person name="Dunn P."/>
            <person name="Etgu P."/>
            <person name="Feldblyum T.V."/>
            <person name="Feng J.-D."/>
            <person name="Fong B."/>
            <person name="Fujii C.Y."/>
            <person name="Gill J.E."/>
            <person name="Goldsmith A.D."/>
            <person name="Haas B."/>
            <person name="Hansen N.F."/>
            <person name="Hughes B."/>
            <person name="Huizar L."/>
            <person name="Hunter J.L."/>
            <person name="Jenkins J."/>
            <person name="Johnson-Hopson C."/>
            <person name="Khan S."/>
            <person name="Khaykin E."/>
            <person name="Kim C.J."/>
            <person name="Koo H.L."/>
            <person name="Kremenetskaia I."/>
            <person name="Kurtz D.B."/>
            <person name="Kwan A."/>
            <person name="Lam B."/>
            <person name="Langin-Hooper S."/>
            <person name="Lee A."/>
            <person name="Lee J.M."/>
            <person name="Lenz C.A."/>
            <person name="Li J.H."/>
            <person name="Li Y.-P."/>
            <person name="Lin X."/>
            <person name="Liu S.X."/>
            <person name="Liu Z.A."/>
            <person name="Luros J.S."/>
            <person name="Maiti R."/>
            <person name="Marziali A."/>
            <person name="Militscher J."/>
            <person name="Miranda M."/>
            <person name="Nguyen M."/>
            <person name="Nierman W.C."/>
            <person name="Osborne B.I."/>
            <person name="Pai G."/>
            <person name="Peterson J."/>
            <person name="Pham P.K."/>
            <person name="Rizzo M."/>
            <person name="Rooney T."/>
            <person name="Rowley D."/>
            <person name="Sakano H."/>
            <person name="Salzberg S.L."/>
            <person name="Schwartz J.R."/>
            <person name="Shinn P."/>
            <person name="Southwick A.M."/>
            <person name="Sun H."/>
            <person name="Tallon L.J."/>
            <person name="Tambunga G."/>
            <person name="Toriumi M.J."/>
            <person name="Town C.D."/>
            <person name="Utterback T."/>
            <person name="Van Aken S."/>
            <person name="Vaysberg M."/>
            <person name="Vysotskaia V.S."/>
            <person name="Walker M."/>
            <person name="Wu D."/>
            <person name="Yu G."/>
            <person name="Fraser C.M."/>
            <person name="Venter J.C."/>
            <person name="Davis R.W."/>
        </authorList>
    </citation>
    <scope>NUCLEOTIDE SEQUENCE [LARGE SCALE GENOMIC DNA]</scope>
    <source>
        <strain>cv. Columbia</strain>
    </source>
</reference>
<reference key="2">
    <citation type="journal article" date="2017" name="Plant J.">
        <title>Araport11: a complete reannotation of the Arabidopsis thaliana reference genome.</title>
        <authorList>
            <person name="Cheng C.Y."/>
            <person name="Krishnakumar V."/>
            <person name="Chan A.P."/>
            <person name="Thibaud-Nissen F."/>
            <person name="Schobel S."/>
            <person name="Town C.D."/>
        </authorList>
    </citation>
    <scope>GENOME REANNOTATION</scope>
    <source>
        <strain>cv. Columbia</strain>
    </source>
</reference>
<name>RMR3_ARATH</name>
<feature type="signal peptide" evidence="2">
    <location>
        <begin position="1"/>
        <end position="22"/>
    </location>
</feature>
<feature type="chain" id="PRO_0000425117" description="Receptor homology region, transmembrane domain- and RING domain-containing protein 3">
    <location>
        <begin position="23"/>
        <end position="422"/>
    </location>
</feature>
<feature type="topological domain" description="Lumenal" evidence="2">
    <location>
        <begin position="23"/>
        <end position="168"/>
    </location>
</feature>
<feature type="transmembrane region" description="Helical" evidence="2">
    <location>
        <begin position="169"/>
        <end position="189"/>
    </location>
</feature>
<feature type="topological domain" description="Cytoplasmic" evidence="2">
    <location>
        <begin position="190"/>
        <end position="422"/>
    </location>
</feature>
<feature type="domain" description="PA">
    <location>
        <begin position="81"/>
        <end position="146"/>
    </location>
</feature>
<feature type="zinc finger region" description="RING-type; atypical" evidence="3">
    <location>
        <begin position="232"/>
        <end position="274"/>
    </location>
</feature>
<feature type="region of interest" description="Disordered" evidence="4">
    <location>
        <begin position="344"/>
        <end position="368"/>
    </location>
</feature>
<feature type="compositionally biased region" description="Polar residues" evidence="4">
    <location>
        <begin position="349"/>
        <end position="368"/>
    </location>
</feature>
<feature type="glycosylation site" description="N-linked (GlcNAc...) asparagine" evidence="2">
    <location>
        <position position="31"/>
    </location>
</feature>
<feature type="disulfide bond" evidence="2">
    <location>
        <begin position="64"/>
        <end position="89"/>
    </location>
</feature>
<evidence type="ECO:0000250" key="1"/>
<evidence type="ECO:0000255" key="2"/>
<evidence type="ECO:0000255" key="3">
    <source>
        <dbReference type="PROSITE-ProRule" id="PRU00175"/>
    </source>
</evidence>
<evidence type="ECO:0000256" key="4">
    <source>
        <dbReference type="SAM" id="MobiDB-lite"/>
    </source>
</evidence>
<evidence type="ECO:0000305" key="5"/>
<proteinExistence type="inferred from homology"/>
<gene>
    <name type="primary">RMR3</name>
    <name type="ordered locus">At1g22670</name>
    <name type="ORF">T22J18.16</name>
</gene>
<organism>
    <name type="scientific">Arabidopsis thaliana</name>
    <name type="common">Mouse-ear cress</name>
    <dbReference type="NCBI Taxonomy" id="3702"/>
    <lineage>
        <taxon>Eukaryota</taxon>
        <taxon>Viridiplantae</taxon>
        <taxon>Streptophyta</taxon>
        <taxon>Embryophyta</taxon>
        <taxon>Tracheophyta</taxon>
        <taxon>Spermatophyta</taxon>
        <taxon>Magnoliopsida</taxon>
        <taxon>eudicotyledons</taxon>
        <taxon>Gunneridae</taxon>
        <taxon>Pentapetalae</taxon>
        <taxon>rosids</taxon>
        <taxon>malvids</taxon>
        <taxon>Brassicales</taxon>
        <taxon>Brassicaceae</taxon>
        <taxon>Camelineae</taxon>
        <taxon>Arabidopsis</taxon>
    </lineage>
</organism>